<sequence>MKRTFQPSVLKRARTHGFRARMATKNGRQVLARRRAKGRKSLSA</sequence>
<name>RL34_HAEDU</name>
<protein>
    <recommendedName>
        <fullName evidence="1">Large ribosomal subunit protein bL34</fullName>
    </recommendedName>
    <alternativeName>
        <fullName evidence="3">50S ribosomal protein L34</fullName>
    </alternativeName>
</protein>
<comment type="similarity">
    <text evidence="1">Belongs to the bacterial ribosomal protein bL34 family.</text>
</comment>
<keyword id="KW-1185">Reference proteome</keyword>
<keyword id="KW-0687">Ribonucleoprotein</keyword>
<keyword id="KW-0689">Ribosomal protein</keyword>
<gene>
    <name evidence="1" type="primary">rpmH</name>
    <name type="ordered locus">HD_0753</name>
</gene>
<evidence type="ECO:0000255" key="1">
    <source>
        <dbReference type="HAMAP-Rule" id="MF_00391"/>
    </source>
</evidence>
<evidence type="ECO:0000256" key="2">
    <source>
        <dbReference type="SAM" id="MobiDB-lite"/>
    </source>
</evidence>
<evidence type="ECO:0000305" key="3"/>
<dbReference type="EMBL" id="AE017143">
    <property type="protein sequence ID" value="AAP95663.1"/>
    <property type="molecule type" value="Genomic_DNA"/>
</dbReference>
<dbReference type="RefSeq" id="WP_005599701.1">
    <property type="nucleotide sequence ID" value="NC_002940.2"/>
</dbReference>
<dbReference type="SMR" id="Q7VN33"/>
<dbReference type="STRING" id="233412.HD_0753"/>
<dbReference type="GeneID" id="92743426"/>
<dbReference type="KEGG" id="hdu:HD_0753"/>
<dbReference type="eggNOG" id="COG0230">
    <property type="taxonomic scope" value="Bacteria"/>
</dbReference>
<dbReference type="HOGENOM" id="CLU_129938_2_0_6"/>
<dbReference type="OrthoDB" id="9804164at2"/>
<dbReference type="Proteomes" id="UP000001022">
    <property type="component" value="Chromosome"/>
</dbReference>
<dbReference type="GO" id="GO:1990904">
    <property type="term" value="C:ribonucleoprotein complex"/>
    <property type="evidence" value="ECO:0007669"/>
    <property type="project" value="UniProtKB-KW"/>
</dbReference>
<dbReference type="GO" id="GO:0005840">
    <property type="term" value="C:ribosome"/>
    <property type="evidence" value="ECO:0007669"/>
    <property type="project" value="UniProtKB-KW"/>
</dbReference>
<dbReference type="GO" id="GO:0003735">
    <property type="term" value="F:structural constituent of ribosome"/>
    <property type="evidence" value="ECO:0007669"/>
    <property type="project" value="InterPro"/>
</dbReference>
<dbReference type="GO" id="GO:0006412">
    <property type="term" value="P:translation"/>
    <property type="evidence" value="ECO:0007669"/>
    <property type="project" value="UniProtKB-UniRule"/>
</dbReference>
<dbReference type="FunFam" id="1.10.287.3980:FF:000001">
    <property type="entry name" value="Mitochondrial ribosomal protein L34"/>
    <property type="match status" value="1"/>
</dbReference>
<dbReference type="Gene3D" id="1.10.287.3980">
    <property type="match status" value="1"/>
</dbReference>
<dbReference type="HAMAP" id="MF_00391">
    <property type="entry name" value="Ribosomal_bL34"/>
    <property type="match status" value="1"/>
</dbReference>
<dbReference type="InterPro" id="IPR000271">
    <property type="entry name" value="Ribosomal_bL34"/>
</dbReference>
<dbReference type="InterPro" id="IPR020939">
    <property type="entry name" value="Ribosomal_bL34_CS"/>
</dbReference>
<dbReference type="NCBIfam" id="TIGR01030">
    <property type="entry name" value="rpmH_bact"/>
    <property type="match status" value="1"/>
</dbReference>
<dbReference type="PANTHER" id="PTHR14503:SF4">
    <property type="entry name" value="LARGE RIBOSOMAL SUBUNIT PROTEIN BL34M"/>
    <property type="match status" value="1"/>
</dbReference>
<dbReference type="PANTHER" id="PTHR14503">
    <property type="entry name" value="MITOCHONDRIAL RIBOSOMAL PROTEIN 34 FAMILY MEMBER"/>
    <property type="match status" value="1"/>
</dbReference>
<dbReference type="Pfam" id="PF00468">
    <property type="entry name" value="Ribosomal_L34"/>
    <property type="match status" value="1"/>
</dbReference>
<dbReference type="PROSITE" id="PS00784">
    <property type="entry name" value="RIBOSOMAL_L34"/>
    <property type="match status" value="1"/>
</dbReference>
<proteinExistence type="inferred from homology"/>
<reference key="1">
    <citation type="submission" date="2003-06" db="EMBL/GenBank/DDBJ databases">
        <title>The complete genome sequence of Haemophilus ducreyi.</title>
        <authorList>
            <person name="Munson R.S. Jr."/>
            <person name="Ray W.C."/>
            <person name="Mahairas G."/>
            <person name="Sabo P."/>
            <person name="Mungur R."/>
            <person name="Johnson L."/>
            <person name="Nguyen D."/>
            <person name="Wang J."/>
            <person name="Forst C."/>
            <person name="Hood L."/>
        </authorList>
    </citation>
    <scope>NUCLEOTIDE SEQUENCE [LARGE SCALE GENOMIC DNA]</scope>
    <source>
        <strain>35000HP / ATCC 700724</strain>
    </source>
</reference>
<accession>Q7VN33</accession>
<organism>
    <name type="scientific">Haemophilus ducreyi (strain 35000HP / ATCC 700724)</name>
    <dbReference type="NCBI Taxonomy" id="233412"/>
    <lineage>
        <taxon>Bacteria</taxon>
        <taxon>Pseudomonadati</taxon>
        <taxon>Pseudomonadota</taxon>
        <taxon>Gammaproteobacteria</taxon>
        <taxon>Pasteurellales</taxon>
        <taxon>Pasteurellaceae</taxon>
        <taxon>Haemophilus</taxon>
    </lineage>
</organism>
<feature type="chain" id="PRO_0000187389" description="Large ribosomal subunit protein bL34">
    <location>
        <begin position="1"/>
        <end position="44"/>
    </location>
</feature>
<feature type="region of interest" description="Disordered" evidence="2">
    <location>
        <begin position="23"/>
        <end position="44"/>
    </location>
</feature>
<feature type="compositionally biased region" description="Basic residues" evidence="2">
    <location>
        <begin position="31"/>
        <end position="44"/>
    </location>
</feature>